<reference key="1">
    <citation type="journal article" date="2009" name="J. Bacteriol.">
        <title>Role of conjugative elements in the evolution of the multidrug-resistant pandemic clone Streptococcus pneumoniae Spain23F ST81.</title>
        <authorList>
            <person name="Croucher N.J."/>
            <person name="Walker D."/>
            <person name="Romero P."/>
            <person name="Lennard N."/>
            <person name="Paterson G.K."/>
            <person name="Bason N.C."/>
            <person name="Mitchell A.M."/>
            <person name="Quail M.A."/>
            <person name="Andrew P.W."/>
            <person name="Parkhill J."/>
            <person name="Bentley S.D."/>
            <person name="Mitchell T.J."/>
        </authorList>
    </citation>
    <scope>NUCLEOTIDE SEQUENCE [LARGE SCALE GENOMIC DNA]</scope>
    <source>
        <strain>ATCC 700669 / Spain 23F-1</strain>
    </source>
</reference>
<protein>
    <recommendedName>
        <fullName evidence="1">Polyribonucleotide nucleotidyltransferase</fullName>
        <ecNumber evidence="1">2.7.7.8</ecNumber>
    </recommendedName>
    <alternativeName>
        <fullName evidence="1">Polynucleotide phosphorylase</fullName>
        <shortName evidence="1">PNPase</shortName>
    </alternativeName>
</protein>
<name>PNP_STRPJ</name>
<evidence type="ECO:0000255" key="1">
    <source>
        <dbReference type="HAMAP-Rule" id="MF_01595"/>
    </source>
</evidence>
<evidence type="ECO:0000256" key="2">
    <source>
        <dbReference type="SAM" id="MobiDB-lite"/>
    </source>
</evidence>
<gene>
    <name evidence="1" type="primary">pnp</name>
    <name type="ordered locus">SPN23F05310</name>
</gene>
<proteinExistence type="inferred from homology"/>
<feature type="chain" id="PRO_1000185754" description="Polyribonucleotide nucleotidyltransferase">
    <location>
        <begin position="1"/>
        <end position="737"/>
    </location>
</feature>
<feature type="domain" description="KH" evidence="1">
    <location>
        <begin position="556"/>
        <end position="615"/>
    </location>
</feature>
<feature type="domain" description="S1 motif" evidence="1">
    <location>
        <begin position="625"/>
        <end position="693"/>
    </location>
</feature>
<feature type="region of interest" description="Disordered" evidence="2">
    <location>
        <begin position="691"/>
        <end position="737"/>
    </location>
</feature>
<feature type="compositionally biased region" description="Basic and acidic residues" evidence="2">
    <location>
        <begin position="700"/>
        <end position="714"/>
    </location>
</feature>
<feature type="compositionally biased region" description="Basic residues" evidence="2">
    <location>
        <begin position="715"/>
        <end position="724"/>
    </location>
</feature>
<feature type="compositionally biased region" description="Basic and acidic residues" evidence="2">
    <location>
        <begin position="725"/>
        <end position="737"/>
    </location>
</feature>
<feature type="binding site" evidence="1">
    <location>
        <position position="489"/>
    </location>
    <ligand>
        <name>Mg(2+)</name>
        <dbReference type="ChEBI" id="CHEBI:18420"/>
    </ligand>
</feature>
<feature type="binding site" evidence="1">
    <location>
        <position position="495"/>
    </location>
    <ligand>
        <name>Mg(2+)</name>
        <dbReference type="ChEBI" id="CHEBI:18420"/>
    </ligand>
</feature>
<sequence length="737" mass="81030">MAKQVFQTTFAGRELIVETGQVAKQANGSVVVRYGESTVLTAAVMSKKMATGDFFPLQVNYEEKMYAAGKFPGGFMKREGRPSTDATLTARLIDRPIRPMFAEGFRNEVQVINTVLSYDENASAPMAAMFGSSLALSISDIPFDGPIAGVQVGYVDGQIIINPSQEQAEQSLLELTVAGTKHAINMVESGAKELSEEIMLEALLKGHEAVKELIAFQEEIVAAVGKEKAEVELLHVDAELQAEIIAAYNSDLQKAVQVEEKLAREAATQAVKDQVTAVYEEKYANHEEFDRIMRDVAEILEQMEHAEVRRLITEDKVRPDGRKVDEIRPLDAVVDFLPRVHGSGLFTRGQTQALSVLTLAPMGETQIIDGLDPEYKKRFMHHYNFPQYSVGETGRYGAPGRREIGHGALGERALAQVLPSLEEFPYAIRLVAEVLESNGSSSQASICAGTLALMTGGVPIKAPVAGIAMGLISDGNNYTVLTDIQGLEDHFGDMDFKVAGTRDGITALQMDIKIQGITAEILTEALAQAKKARFEILDVIEATIPEVRPELAPTAPKIDTIKIDVDKIKIVIGKGGETIDKIIAETGVKIDIDEEGNVSIYSSDQDAINRAKEIIAGLVREAKVDEVYRAKVVRIEKFGAFVNLFDKTDALVHISEMAWTRTNRVEDLVEIGDEVDVKVIKIDEKGRIDASMKALLPRPPKPEHDEKGEKSERPHRPRHHKDHKPKKEFTETPKDSE</sequence>
<accession>B8ZMC0</accession>
<keyword id="KW-0963">Cytoplasm</keyword>
<keyword id="KW-0460">Magnesium</keyword>
<keyword id="KW-0479">Metal-binding</keyword>
<keyword id="KW-0548">Nucleotidyltransferase</keyword>
<keyword id="KW-0694">RNA-binding</keyword>
<keyword id="KW-0808">Transferase</keyword>
<organism>
    <name type="scientific">Streptococcus pneumoniae (strain ATCC 700669 / Spain 23F-1)</name>
    <dbReference type="NCBI Taxonomy" id="561276"/>
    <lineage>
        <taxon>Bacteria</taxon>
        <taxon>Bacillati</taxon>
        <taxon>Bacillota</taxon>
        <taxon>Bacilli</taxon>
        <taxon>Lactobacillales</taxon>
        <taxon>Streptococcaceae</taxon>
        <taxon>Streptococcus</taxon>
    </lineage>
</organism>
<dbReference type="EC" id="2.7.7.8" evidence="1"/>
<dbReference type="EMBL" id="FM211187">
    <property type="protein sequence ID" value="CAR68380.1"/>
    <property type="molecule type" value="Genomic_DNA"/>
</dbReference>
<dbReference type="RefSeq" id="WP_001118979.1">
    <property type="nucleotide sequence ID" value="NC_011900.1"/>
</dbReference>
<dbReference type="SMR" id="B8ZMC0"/>
<dbReference type="KEGG" id="sne:SPN23F05310"/>
<dbReference type="HOGENOM" id="CLU_004217_2_2_9"/>
<dbReference type="GO" id="GO:0005829">
    <property type="term" value="C:cytosol"/>
    <property type="evidence" value="ECO:0007669"/>
    <property type="project" value="TreeGrafter"/>
</dbReference>
<dbReference type="GO" id="GO:0000175">
    <property type="term" value="F:3'-5'-RNA exonuclease activity"/>
    <property type="evidence" value="ECO:0007669"/>
    <property type="project" value="TreeGrafter"/>
</dbReference>
<dbReference type="GO" id="GO:0000287">
    <property type="term" value="F:magnesium ion binding"/>
    <property type="evidence" value="ECO:0007669"/>
    <property type="project" value="UniProtKB-UniRule"/>
</dbReference>
<dbReference type="GO" id="GO:0004654">
    <property type="term" value="F:polyribonucleotide nucleotidyltransferase activity"/>
    <property type="evidence" value="ECO:0007669"/>
    <property type="project" value="UniProtKB-UniRule"/>
</dbReference>
<dbReference type="GO" id="GO:0003723">
    <property type="term" value="F:RNA binding"/>
    <property type="evidence" value="ECO:0007669"/>
    <property type="project" value="UniProtKB-UniRule"/>
</dbReference>
<dbReference type="GO" id="GO:0006402">
    <property type="term" value="P:mRNA catabolic process"/>
    <property type="evidence" value="ECO:0007669"/>
    <property type="project" value="UniProtKB-UniRule"/>
</dbReference>
<dbReference type="GO" id="GO:0006396">
    <property type="term" value="P:RNA processing"/>
    <property type="evidence" value="ECO:0007669"/>
    <property type="project" value="InterPro"/>
</dbReference>
<dbReference type="CDD" id="cd02393">
    <property type="entry name" value="KH-I_PNPase"/>
    <property type="match status" value="1"/>
</dbReference>
<dbReference type="CDD" id="cd11363">
    <property type="entry name" value="RNase_PH_PNPase_1"/>
    <property type="match status" value="1"/>
</dbReference>
<dbReference type="CDD" id="cd11364">
    <property type="entry name" value="RNase_PH_PNPase_2"/>
    <property type="match status" value="1"/>
</dbReference>
<dbReference type="FunFam" id="2.40.50.140:FF:000023">
    <property type="entry name" value="Polyribonucleotide nucleotidyltransferase"/>
    <property type="match status" value="1"/>
</dbReference>
<dbReference type="FunFam" id="3.30.1370.10:FF:000001">
    <property type="entry name" value="Polyribonucleotide nucleotidyltransferase"/>
    <property type="match status" value="1"/>
</dbReference>
<dbReference type="FunFam" id="3.30.230.70:FF:000001">
    <property type="entry name" value="Polyribonucleotide nucleotidyltransferase"/>
    <property type="match status" value="1"/>
</dbReference>
<dbReference type="FunFam" id="3.30.230.70:FF:000002">
    <property type="entry name" value="Polyribonucleotide nucleotidyltransferase"/>
    <property type="match status" value="1"/>
</dbReference>
<dbReference type="Gene3D" id="3.30.230.70">
    <property type="entry name" value="GHMP Kinase, N-terminal domain"/>
    <property type="match status" value="2"/>
</dbReference>
<dbReference type="Gene3D" id="3.30.1370.10">
    <property type="entry name" value="K Homology domain, type 1"/>
    <property type="match status" value="1"/>
</dbReference>
<dbReference type="Gene3D" id="2.40.50.140">
    <property type="entry name" value="Nucleic acid-binding proteins"/>
    <property type="match status" value="1"/>
</dbReference>
<dbReference type="HAMAP" id="MF_01595">
    <property type="entry name" value="PNPase"/>
    <property type="match status" value="1"/>
</dbReference>
<dbReference type="InterPro" id="IPR001247">
    <property type="entry name" value="ExoRNase_PH_dom1"/>
</dbReference>
<dbReference type="InterPro" id="IPR015847">
    <property type="entry name" value="ExoRNase_PH_dom2"/>
</dbReference>
<dbReference type="InterPro" id="IPR036345">
    <property type="entry name" value="ExoRNase_PH_dom2_sf"/>
</dbReference>
<dbReference type="InterPro" id="IPR004087">
    <property type="entry name" value="KH_dom"/>
</dbReference>
<dbReference type="InterPro" id="IPR004088">
    <property type="entry name" value="KH_dom_type_1"/>
</dbReference>
<dbReference type="InterPro" id="IPR036612">
    <property type="entry name" value="KH_dom_type_1_sf"/>
</dbReference>
<dbReference type="InterPro" id="IPR012340">
    <property type="entry name" value="NA-bd_OB-fold"/>
</dbReference>
<dbReference type="InterPro" id="IPR012162">
    <property type="entry name" value="PNPase"/>
</dbReference>
<dbReference type="InterPro" id="IPR027408">
    <property type="entry name" value="PNPase/RNase_PH_dom_sf"/>
</dbReference>
<dbReference type="InterPro" id="IPR015848">
    <property type="entry name" value="PNPase_PH_RNA-bd_bac/org-type"/>
</dbReference>
<dbReference type="InterPro" id="IPR036456">
    <property type="entry name" value="PNPase_PH_RNA-bd_sf"/>
</dbReference>
<dbReference type="InterPro" id="IPR020568">
    <property type="entry name" value="Ribosomal_Su5_D2-typ_SF"/>
</dbReference>
<dbReference type="InterPro" id="IPR003029">
    <property type="entry name" value="S1_domain"/>
</dbReference>
<dbReference type="NCBIfam" id="TIGR03591">
    <property type="entry name" value="polynuc_phos"/>
    <property type="match status" value="1"/>
</dbReference>
<dbReference type="NCBIfam" id="NF008805">
    <property type="entry name" value="PRK11824.1"/>
    <property type="match status" value="1"/>
</dbReference>
<dbReference type="PANTHER" id="PTHR11252">
    <property type="entry name" value="POLYRIBONUCLEOTIDE NUCLEOTIDYLTRANSFERASE"/>
    <property type="match status" value="1"/>
</dbReference>
<dbReference type="PANTHER" id="PTHR11252:SF0">
    <property type="entry name" value="POLYRIBONUCLEOTIDE NUCLEOTIDYLTRANSFERASE 1, MITOCHONDRIAL"/>
    <property type="match status" value="1"/>
</dbReference>
<dbReference type="Pfam" id="PF00013">
    <property type="entry name" value="KH_1"/>
    <property type="match status" value="1"/>
</dbReference>
<dbReference type="Pfam" id="PF03726">
    <property type="entry name" value="PNPase"/>
    <property type="match status" value="1"/>
</dbReference>
<dbReference type="Pfam" id="PF01138">
    <property type="entry name" value="RNase_PH"/>
    <property type="match status" value="2"/>
</dbReference>
<dbReference type="Pfam" id="PF03725">
    <property type="entry name" value="RNase_PH_C"/>
    <property type="match status" value="2"/>
</dbReference>
<dbReference type="Pfam" id="PF00575">
    <property type="entry name" value="S1"/>
    <property type="match status" value="1"/>
</dbReference>
<dbReference type="PIRSF" id="PIRSF005499">
    <property type="entry name" value="PNPase"/>
    <property type="match status" value="1"/>
</dbReference>
<dbReference type="SMART" id="SM00322">
    <property type="entry name" value="KH"/>
    <property type="match status" value="1"/>
</dbReference>
<dbReference type="SMART" id="SM00316">
    <property type="entry name" value="S1"/>
    <property type="match status" value="1"/>
</dbReference>
<dbReference type="SUPFAM" id="SSF54791">
    <property type="entry name" value="Eukaryotic type KH-domain (KH-domain type I)"/>
    <property type="match status" value="1"/>
</dbReference>
<dbReference type="SUPFAM" id="SSF50249">
    <property type="entry name" value="Nucleic acid-binding proteins"/>
    <property type="match status" value="1"/>
</dbReference>
<dbReference type="SUPFAM" id="SSF46915">
    <property type="entry name" value="Polynucleotide phosphorylase/guanosine pentaphosphate synthase (PNPase/GPSI), domain 3"/>
    <property type="match status" value="1"/>
</dbReference>
<dbReference type="SUPFAM" id="SSF55666">
    <property type="entry name" value="Ribonuclease PH domain 2-like"/>
    <property type="match status" value="2"/>
</dbReference>
<dbReference type="SUPFAM" id="SSF54211">
    <property type="entry name" value="Ribosomal protein S5 domain 2-like"/>
    <property type="match status" value="2"/>
</dbReference>
<dbReference type="PROSITE" id="PS50084">
    <property type="entry name" value="KH_TYPE_1"/>
    <property type="match status" value="1"/>
</dbReference>
<dbReference type="PROSITE" id="PS50126">
    <property type="entry name" value="S1"/>
    <property type="match status" value="1"/>
</dbReference>
<comment type="function">
    <text evidence="1">Involved in mRNA degradation. Catalyzes the phosphorolysis of single-stranded polyribonucleotides processively in the 3'- to 5'-direction.</text>
</comment>
<comment type="catalytic activity">
    <reaction evidence="1">
        <text>RNA(n+1) + phosphate = RNA(n) + a ribonucleoside 5'-diphosphate</text>
        <dbReference type="Rhea" id="RHEA:22096"/>
        <dbReference type="Rhea" id="RHEA-COMP:14527"/>
        <dbReference type="Rhea" id="RHEA-COMP:17342"/>
        <dbReference type="ChEBI" id="CHEBI:43474"/>
        <dbReference type="ChEBI" id="CHEBI:57930"/>
        <dbReference type="ChEBI" id="CHEBI:140395"/>
        <dbReference type="EC" id="2.7.7.8"/>
    </reaction>
</comment>
<comment type="cofactor">
    <cofactor evidence="1">
        <name>Mg(2+)</name>
        <dbReference type="ChEBI" id="CHEBI:18420"/>
    </cofactor>
</comment>
<comment type="subcellular location">
    <subcellularLocation>
        <location evidence="1">Cytoplasm</location>
    </subcellularLocation>
</comment>
<comment type="similarity">
    <text evidence="1">Belongs to the polyribonucleotide nucleotidyltransferase family.</text>
</comment>